<reference key="1">
    <citation type="submission" date="2008-01" db="EMBL/GenBank/DDBJ databases">
        <title>Complete sequence of Pseudomonas putida GB-1.</title>
        <authorList>
            <consortium name="US DOE Joint Genome Institute"/>
            <person name="Copeland A."/>
            <person name="Lucas S."/>
            <person name="Lapidus A."/>
            <person name="Barry K."/>
            <person name="Glavina del Rio T."/>
            <person name="Dalin E."/>
            <person name="Tice H."/>
            <person name="Pitluck S."/>
            <person name="Bruce D."/>
            <person name="Goodwin L."/>
            <person name="Chertkov O."/>
            <person name="Brettin T."/>
            <person name="Detter J.C."/>
            <person name="Han C."/>
            <person name="Kuske C.R."/>
            <person name="Schmutz J."/>
            <person name="Larimer F."/>
            <person name="Land M."/>
            <person name="Hauser L."/>
            <person name="Kyrpides N."/>
            <person name="Kim E."/>
            <person name="McCarthy J.K."/>
            <person name="Richardson P."/>
        </authorList>
    </citation>
    <scope>NUCLEOTIDE SEQUENCE [LARGE SCALE GENOMIC DNA]</scope>
    <source>
        <strain>GB-1</strain>
    </source>
</reference>
<dbReference type="EC" id="1.13.11.5" evidence="1"/>
<dbReference type="EMBL" id="CP000926">
    <property type="protein sequence ID" value="ABZ00492.1"/>
    <property type="molecule type" value="Genomic_DNA"/>
</dbReference>
<dbReference type="RefSeq" id="WP_012274143.1">
    <property type="nucleotide sequence ID" value="NC_010322.1"/>
</dbReference>
<dbReference type="SMR" id="B0KGU6"/>
<dbReference type="KEGG" id="ppg:PputGB1_4605"/>
<dbReference type="eggNOG" id="COG3508">
    <property type="taxonomic scope" value="Bacteria"/>
</dbReference>
<dbReference type="HOGENOM" id="CLU_027174_0_0_6"/>
<dbReference type="UniPathway" id="UPA00139">
    <property type="reaction ID" value="UER00339"/>
</dbReference>
<dbReference type="Proteomes" id="UP000002157">
    <property type="component" value="Chromosome"/>
</dbReference>
<dbReference type="GO" id="GO:0005737">
    <property type="term" value="C:cytoplasm"/>
    <property type="evidence" value="ECO:0007669"/>
    <property type="project" value="TreeGrafter"/>
</dbReference>
<dbReference type="GO" id="GO:0004411">
    <property type="term" value="F:homogentisate 1,2-dioxygenase activity"/>
    <property type="evidence" value="ECO:0007669"/>
    <property type="project" value="UniProtKB-UniRule"/>
</dbReference>
<dbReference type="GO" id="GO:0005506">
    <property type="term" value="F:iron ion binding"/>
    <property type="evidence" value="ECO:0007669"/>
    <property type="project" value="UniProtKB-UniRule"/>
</dbReference>
<dbReference type="GO" id="GO:0006559">
    <property type="term" value="P:L-phenylalanine catabolic process"/>
    <property type="evidence" value="ECO:0007669"/>
    <property type="project" value="UniProtKB-UniRule"/>
</dbReference>
<dbReference type="GO" id="GO:0006572">
    <property type="term" value="P:tyrosine catabolic process"/>
    <property type="evidence" value="ECO:0007669"/>
    <property type="project" value="UniProtKB-UniRule"/>
</dbReference>
<dbReference type="CDD" id="cd07000">
    <property type="entry name" value="cupin_HGO_N"/>
    <property type="match status" value="1"/>
</dbReference>
<dbReference type="FunFam" id="2.60.120.10:FF:000036">
    <property type="entry name" value="Homogentisate 1,2-dioxygenase"/>
    <property type="match status" value="1"/>
</dbReference>
<dbReference type="Gene3D" id="2.60.120.10">
    <property type="entry name" value="Jelly Rolls"/>
    <property type="match status" value="1"/>
</dbReference>
<dbReference type="HAMAP" id="MF_00334">
    <property type="entry name" value="Homogentis_dioxygen"/>
    <property type="match status" value="1"/>
</dbReference>
<dbReference type="InterPro" id="IPR046451">
    <property type="entry name" value="HgmA_C"/>
</dbReference>
<dbReference type="InterPro" id="IPR046452">
    <property type="entry name" value="HgmA_N"/>
</dbReference>
<dbReference type="InterPro" id="IPR005708">
    <property type="entry name" value="Homogentis_dOase"/>
</dbReference>
<dbReference type="InterPro" id="IPR022950">
    <property type="entry name" value="Homogentis_dOase_bac"/>
</dbReference>
<dbReference type="InterPro" id="IPR014710">
    <property type="entry name" value="RmlC-like_jellyroll"/>
</dbReference>
<dbReference type="InterPro" id="IPR011051">
    <property type="entry name" value="RmlC_Cupin_sf"/>
</dbReference>
<dbReference type="NCBIfam" id="TIGR01015">
    <property type="entry name" value="hmgA"/>
    <property type="match status" value="1"/>
</dbReference>
<dbReference type="PANTHER" id="PTHR11056">
    <property type="entry name" value="HOMOGENTISATE 1,2-DIOXYGENASE"/>
    <property type="match status" value="1"/>
</dbReference>
<dbReference type="PANTHER" id="PTHR11056:SF0">
    <property type="entry name" value="HOMOGENTISATE 1,2-DIOXYGENASE"/>
    <property type="match status" value="1"/>
</dbReference>
<dbReference type="Pfam" id="PF04209">
    <property type="entry name" value="HgmA_C"/>
    <property type="match status" value="1"/>
</dbReference>
<dbReference type="Pfam" id="PF20510">
    <property type="entry name" value="HgmA_N"/>
    <property type="match status" value="1"/>
</dbReference>
<dbReference type="SUPFAM" id="SSF51182">
    <property type="entry name" value="RmlC-like cupins"/>
    <property type="match status" value="1"/>
</dbReference>
<feature type="chain" id="PRO_1000079266" description="Homogentisate 1,2-dioxygenase">
    <location>
        <begin position="1"/>
        <end position="433"/>
    </location>
</feature>
<feature type="active site" description="Proton acceptor" evidence="1">
    <location>
        <position position="288"/>
    </location>
</feature>
<feature type="binding site" evidence="1">
    <location>
        <position position="331"/>
    </location>
    <ligand>
        <name>Fe cation</name>
        <dbReference type="ChEBI" id="CHEBI:24875"/>
    </ligand>
</feature>
<feature type="binding site" evidence="1">
    <location>
        <position position="337"/>
    </location>
    <ligand>
        <name>Fe cation</name>
        <dbReference type="ChEBI" id="CHEBI:24875"/>
    </ligand>
</feature>
<feature type="binding site" evidence="1">
    <location>
        <position position="346"/>
    </location>
    <ligand>
        <name>homogentisate</name>
        <dbReference type="ChEBI" id="CHEBI:16169"/>
    </ligand>
</feature>
<feature type="binding site" evidence="1">
    <location>
        <position position="367"/>
    </location>
    <ligand>
        <name>Fe cation</name>
        <dbReference type="ChEBI" id="CHEBI:24875"/>
    </ligand>
</feature>
<feature type="binding site" evidence="1">
    <location>
        <position position="367"/>
    </location>
    <ligand>
        <name>homogentisate</name>
        <dbReference type="ChEBI" id="CHEBI:16169"/>
    </ligand>
</feature>
<comment type="function">
    <text evidence="1">Involved in the catabolism of homogentisate (2,5-dihydroxyphenylacetate or 2,5-OH-PhAc), a central intermediate in the degradation of phenylalanine and tyrosine. Catalyzes the oxidative ring cleavage of the aromatic ring of homogentisate to yield maleylacetoacetate.</text>
</comment>
<comment type="catalytic activity">
    <reaction evidence="1">
        <text>homogentisate + O2 = 4-maleylacetoacetate + H(+)</text>
        <dbReference type="Rhea" id="RHEA:15449"/>
        <dbReference type="ChEBI" id="CHEBI:15378"/>
        <dbReference type="ChEBI" id="CHEBI:15379"/>
        <dbReference type="ChEBI" id="CHEBI:16169"/>
        <dbReference type="ChEBI" id="CHEBI:17105"/>
        <dbReference type="EC" id="1.13.11.5"/>
    </reaction>
</comment>
<comment type="cofactor">
    <cofactor evidence="1">
        <name>Fe cation</name>
        <dbReference type="ChEBI" id="CHEBI:24875"/>
    </cofactor>
</comment>
<comment type="pathway">
    <text evidence="1">Amino-acid degradation; L-phenylalanine degradation; acetoacetate and fumarate from L-phenylalanine: step 4/6.</text>
</comment>
<comment type="subunit">
    <text evidence="1">Hexamer; dimer of trimers.</text>
</comment>
<comment type="similarity">
    <text evidence="1">Belongs to the homogentisate dioxygenase family.</text>
</comment>
<gene>
    <name evidence="1" type="primary">hmgA</name>
    <name type="ordered locus">PputGB1_4605</name>
</gene>
<name>HGD_PSEPG</name>
<sequence length="433" mass="48079">MNRDTSPDLHYLSGFGNEFASEALPGALPVGQNSPQKAPYGLYAELLSGTAFTMARSELRRTWLYRIRPSALHPRFERLARQPLSGPLGGINPNRLRWSPQPIPAEPTDFIEGWLPMVANAAAEKPAGVSIYIYRANRSMERVFFNADGELLLVPEQGRLRIATELGVMEVEPLEIAVIPRGMKFRVELLDGQARGYIAENHGAPLRIPDLGPIGSNGLANPRDFLTPVAHYEEAEAPVQLVQKFLGEHWACELQHSPLDVVAWHGSNVPYKYDLRRFNTIGTVSFDHPDPSIFTVLTSPTSVHGLANMDFVIFPPRWMVAENTFRPPWFHRNLMNEFMGLINGAYDAKAEGFLPGGASLHGVMSAHGPDAETCEKAIAADLAPHKIDNTMAFMFETSQVLRPSLQALECPQLQADYDSCWATLPSTFNPNRR</sequence>
<evidence type="ECO:0000255" key="1">
    <source>
        <dbReference type="HAMAP-Rule" id="MF_00334"/>
    </source>
</evidence>
<protein>
    <recommendedName>
        <fullName evidence="1">Homogentisate 1,2-dioxygenase</fullName>
        <shortName evidence="1">HGDO</shortName>
        <ecNumber evidence="1">1.13.11.5</ecNumber>
    </recommendedName>
    <alternativeName>
        <fullName evidence="1">Homogentisate oxygenase</fullName>
    </alternativeName>
    <alternativeName>
        <fullName evidence="1">Homogentisic acid oxidase</fullName>
    </alternativeName>
    <alternativeName>
        <fullName evidence="1">Homogentisicase</fullName>
    </alternativeName>
</protein>
<accession>B0KGU6</accession>
<organism>
    <name type="scientific">Pseudomonas putida (strain GB-1)</name>
    <dbReference type="NCBI Taxonomy" id="76869"/>
    <lineage>
        <taxon>Bacteria</taxon>
        <taxon>Pseudomonadati</taxon>
        <taxon>Pseudomonadota</taxon>
        <taxon>Gammaproteobacteria</taxon>
        <taxon>Pseudomonadales</taxon>
        <taxon>Pseudomonadaceae</taxon>
        <taxon>Pseudomonas</taxon>
    </lineage>
</organism>
<proteinExistence type="inferred from homology"/>
<keyword id="KW-0223">Dioxygenase</keyword>
<keyword id="KW-0408">Iron</keyword>
<keyword id="KW-0479">Metal-binding</keyword>
<keyword id="KW-0560">Oxidoreductase</keyword>
<keyword id="KW-0585">Phenylalanine catabolism</keyword>
<keyword id="KW-0828">Tyrosine catabolism</keyword>